<sequence length="126" mass="14094">MAILGLGTDIVEIARIEAVIARSGERLARRVLSDNEWAIWKTHHQPVRFLAKRFAVKEAAAKAFGTGIRNGLAFNQFEVFNDELGKPRLRLWGEALKLAEKLGVVNMHVTLADERHYACATVIIES</sequence>
<name>ACPS_SHISS</name>
<reference key="1">
    <citation type="journal article" date="2005" name="Nucleic Acids Res.">
        <title>Genome dynamics and diversity of Shigella species, the etiologic agents of bacillary dysentery.</title>
        <authorList>
            <person name="Yang F."/>
            <person name="Yang J."/>
            <person name="Zhang X."/>
            <person name="Chen L."/>
            <person name="Jiang Y."/>
            <person name="Yan Y."/>
            <person name="Tang X."/>
            <person name="Wang J."/>
            <person name="Xiong Z."/>
            <person name="Dong J."/>
            <person name="Xue Y."/>
            <person name="Zhu Y."/>
            <person name="Xu X."/>
            <person name="Sun L."/>
            <person name="Chen S."/>
            <person name="Nie H."/>
            <person name="Peng J."/>
            <person name="Xu J."/>
            <person name="Wang Y."/>
            <person name="Yuan Z."/>
            <person name="Wen Y."/>
            <person name="Yao Z."/>
            <person name="Shen Y."/>
            <person name="Qiang B."/>
            <person name="Hou Y."/>
            <person name="Yu J."/>
            <person name="Jin Q."/>
        </authorList>
    </citation>
    <scope>NUCLEOTIDE SEQUENCE [LARGE SCALE GENOMIC DNA]</scope>
    <source>
        <strain>Ss046</strain>
    </source>
</reference>
<dbReference type="EC" id="2.7.8.7" evidence="1"/>
<dbReference type="EMBL" id="CP000038">
    <property type="protein sequence ID" value="AAZ89309.1"/>
    <property type="molecule type" value="Genomic_DNA"/>
</dbReference>
<dbReference type="RefSeq" id="WP_000986029.1">
    <property type="nucleotide sequence ID" value="NC_007384.1"/>
</dbReference>
<dbReference type="SMR" id="Q3YYV3"/>
<dbReference type="GeneID" id="93774528"/>
<dbReference type="KEGG" id="ssn:SSON_2687"/>
<dbReference type="HOGENOM" id="CLU_089696_3_1_6"/>
<dbReference type="Proteomes" id="UP000002529">
    <property type="component" value="Chromosome"/>
</dbReference>
<dbReference type="GO" id="GO:0005737">
    <property type="term" value="C:cytoplasm"/>
    <property type="evidence" value="ECO:0007669"/>
    <property type="project" value="UniProtKB-SubCell"/>
</dbReference>
<dbReference type="GO" id="GO:0008897">
    <property type="term" value="F:holo-[acyl-carrier-protein] synthase activity"/>
    <property type="evidence" value="ECO:0007669"/>
    <property type="project" value="UniProtKB-UniRule"/>
</dbReference>
<dbReference type="GO" id="GO:0000287">
    <property type="term" value="F:magnesium ion binding"/>
    <property type="evidence" value="ECO:0007669"/>
    <property type="project" value="UniProtKB-UniRule"/>
</dbReference>
<dbReference type="GO" id="GO:0006633">
    <property type="term" value="P:fatty acid biosynthetic process"/>
    <property type="evidence" value="ECO:0007669"/>
    <property type="project" value="UniProtKB-UniRule"/>
</dbReference>
<dbReference type="FunFam" id="3.90.470.20:FF:000001">
    <property type="entry name" value="Holo-[acyl-carrier-protein] synthase"/>
    <property type="match status" value="1"/>
</dbReference>
<dbReference type="Gene3D" id="3.90.470.20">
    <property type="entry name" value="4'-phosphopantetheinyl transferase domain"/>
    <property type="match status" value="1"/>
</dbReference>
<dbReference type="HAMAP" id="MF_00101">
    <property type="entry name" value="AcpS"/>
    <property type="match status" value="1"/>
</dbReference>
<dbReference type="InterPro" id="IPR008278">
    <property type="entry name" value="4-PPantetheinyl_Trfase_dom"/>
</dbReference>
<dbReference type="InterPro" id="IPR037143">
    <property type="entry name" value="4-PPantetheinyl_Trfase_dom_sf"/>
</dbReference>
<dbReference type="InterPro" id="IPR002582">
    <property type="entry name" value="ACPS"/>
</dbReference>
<dbReference type="InterPro" id="IPR004568">
    <property type="entry name" value="Ppantetheine-prot_Trfase_dom"/>
</dbReference>
<dbReference type="NCBIfam" id="TIGR00516">
    <property type="entry name" value="acpS"/>
    <property type="match status" value="1"/>
</dbReference>
<dbReference type="NCBIfam" id="TIGR00556">
    <property type="entry name" value="pantethn_trn"/>
    <property type="match status" value="1"/>
</dbReference>
<dbReference type="Pfam" id="PF01648">
    <property type="entry name" value="ACPS"/>
    <property type="match status" value="1"/>
</dbReference>
<dbReference type="SUPFAM" id="SSF56214">
    <property type="entry name" value="4'-phosphopantetheinyl transferase"/>
    <property type="match status" value="1"/>
</dbReference>
<protein>
    <recommendedName>
        <fullName evidence="1">Holo-[acyl-carrier-protein] synthase</fullName>
        <shortName evidence="1">Holo-ACP synthase</shortName>
        <ecNumber evidence="1">2.7.8.7</ecNumber>
    </recommendedName>
    <alternativeName>
        <fullName evidence="1">4'-phosphopantetheinyl transferase AcpS</fullName>
    </alternativeName>
</protein>
<accession>Q3YYV3</accession>
<gene>
    <name evidence="1" type="primary">acpS</name>
    <name type="ordered locus">SSON_2687</name>
</gene>
<keyword id="KW-0963">Cytoplasm</keyword>
<keyword id="KW-0275">Fatty acid biosynthesis</keyword>
<keyword id="KW-0276">Fatty acid metabolism</keyword>
<keyword id="KW-0444">Lipid biosynthesis</keyword>
<keyword id="KW-0443">Lipid metabolism</keyword>
<keyword id="KW-0460">Magnesium</keyword>
<keyword id="KW-0479">Metal-binding</keyword>
<keyword id="KW-1185">Reference proteome</keyword>
<keyword id="KW-0808">Transferase</keyword>
<evidence type="ECO:0000255" key="1">
    <source>
        <dbReference type="HAMAP-Rule" id="MF_00101"/>
    </source>
</evidence>
<feature type="chain" id="PRO_0000228305" description="Holo-[acyl-carrier-protein] synthase">
    <location>
        <begin position="1"/>
        <end position="126"/>
    </location>
</feature>
<feature type="binding site" evidence="1">
    <location>
        <position position="9"/>
    </location>
    <ligand>
        <name>Mg(2+)</name>
        <dbReference type="ChEBI" id="CHEBI:18420"/>
    </ligand>
</feature>
<feature type="binding site" evidence="1">
    <location>
        <position position="58"/>
    </location>
    <ligand>
        <name>Mg(2+)</name>
        <dbReference type="ChEBI" id="CHEBI:18420"/>
    </ligand>
</feature>
<organism>
    <name type="scientific">Shigella sonnei (strain Ss046)</name>
    <dbReference type="NCBI Taxonomy" id="300269"/>
    <lineage>
        <taxon>Bacteria</taxon>
        <taxon>Pseudomonadati</taxon>
        <taxon>Pseudomonadota</taxon>
        <taxon>Gammaproteobacteria</taxon>
        <taxon>Enterobacterales</taxon>
        <taxon>Enterobacteriaceae</taxon>
        <taxon>Shigella</taxon>
    </lineage>
</organism>
<proteinExistence type="inferred from homology"/>
<comment type="function">
    <text evidence="1">Transfers the 4'-phosphopantetheine moiety from coenzyme A to a Ser of acyl-carrier-protein.</text>
</comment>
<comment type="catalytic activity">
    <reaction evidence="1">
        <text>apo-[ACP] + CoA = holo-[ACP] + adenosine 3',5'-bisphosphate + H(+)</text>
        <dbReference type="Rhea" id="RHEA:12068"/>
        <dbReference type="Rhea" id="RHEA-COMP:9685"/>
        <dbReference type="Rhea" id="RHEA-COMP:9690"/>
        <dbReference type="ChEBI" id="CHEBI:15378"/>
        <dbReference type="ChEBI" id="CHEBI:29999"/>
        <dbReference type="ChEBI" id="CHEBI:57287"/>
        <dbReference type="ChEBI" id="CHEBI:58343"/>
        <dbReference type="ChEBI" id="CHEBI:64479"/>
        <dbReference type="EC" id="2.7.8.7"/>
    </reaction>
</comment>
<comment type="cofactor">
    <cofactor evidence="1">
        <name>Mg(2+)</name>
        <dbReference type="ChEBI" id="CHEBI:18420"/>
    </cofactor>
</comment>
<comment type="subcellular location">
    <subcellularLocation>
        <location evidence="1">Cytoplasm</location>
    </subcellularLocation>
</comment>
<comment type="similarity">
    <text evidence="1">Belongs to the P-Pant transferase superfamily. AcpS family.</text>
</comment>